<evidence type="ECO:0000250" key="1"/>
<evidence type="ECO:0000255" key="2">
    <source>
        <dbReference type="HAMAP-Rule" id="MF_00118"/>
    </source>
</evidence>
<keyword id="KW-0963">Cytoplasm</keyword>
<keyword id="KW-0251">Elongation factor</keyword>
<keyword id="KW-0342">GTP-binding</keyword>
<keyword id="KW-0378">Hydrolase</keyword>
<keyword id="KW-0460">Magnesium</keyword>
<keyword id="KW-0479">Metal-binding</keyword>
<keyword id="KW-0547">Nucleotide-binding</keyword>
<keyword id="KW-0648">Protein biosynthesis</keyword>
<comment type="function">
    <text evidence="2">GTP hydrolase that promotes the GTP-dependent binding of aminoacyl-tRNA to the A-site of ribosomes during protein biosynthesis.</text>
</comment>
<comment type="catalytic activity">
    <reaction evidence="2">
        <text>GTP + H2O = GDP + phosphate + H(+)</text>
        <dbReference type="Rhea" id="RHEA:19669"/>
        <dbReference type="ChEBI" id="CHEBI:15377"/>
        <dbReference type="ChEBI" id="CHEBI:15378"/>
        <dbReference type="ChEBI" id="CHEBI:37565"/>
        <dbReference type="ChEBI" id="CHEBI:43474"/>
        <dbReference type="ChEBI" id="CHEBI:58189"/>
        <dbReference type="EC" id="3.6.5.3"/>
    </reaction>
    <physiologicalReaction direction="left-to-right" evidence="2">
        <dbReference type="Rhea" id="RHEA:19670"/>
    </physiologicalReaction>
</comment>
<comment type="subunit">
    <text evidence="2">Monomer.</text>
</comment>
<comment type="subcellular location">
    <subcellularLocation>
        <location evidence="2">Cytoplasm</location>
    </subcellularLocation>
</comment>
<comment type="similarity">
    <text evidence="2">Belongs to the TRAFAC class translation factor GTPase superfamily. Classic translation factor GTPase family. EF-Tu/EF-1A subfamily.</text>
</comment>
<feature type="chain" id="PRO_0000337522" description="Elongation factor Tu 1">
    <location>
        <begin position="1"/>
        <end position="394"/>
    </location>
</feature>
<feature type="domain" description="tr-type G">
    <location>
        <begin position="10"/>
        <end position="204"/>
    </location>
</feature>
<feature type="region of interest" description="G1" evidence="1">
    <location>
        <begin position="19"/>
        <end position="26"/>
    </location>
</feature>
<feature type="region of interest" description="G2" evidence="1">
    <location>
        <begin position="60"/>
        <end position="64"/>
    </location>
</feature>
<feature type="region of interest" description="G3" evidence="1">
    <location>
        <begin position="81"/>
        <end position="84"/>
    </location>
</feature>
<feature type="region of interest" description="G4" evidence="1">
    <location>
        <begin position="136"/>
        <end position="139"/>
    </location>
</feature>
<feature type="region of interest" description="G5" evidence="1">
    <location>
        <begin position="174"/>
        <end position="176"/>
    </location>
</feature>
<feature type="binding site" evidence="2">
    <location>
        <begin position="19"/>
        <end position="26"/>
    </location>
    <ligand>
        <name>GTP</name>
        <dbReference type="ChEBI" id="CHEBI:37565"/>
    </ligand>
</feature>
<feature type="binding site" evidence="2">
    <location>
        <position position="26"/>
    </location>
    <ligand>
        <name>Mg(2+)</name>
        <dbReference type="ChEBI" id="CHEBI:18420"/>
    </ligand>
</feature>
<feature type="binding site" evidence="2">
    <location>
        <begin position="81"/>
        <end position="85"/>
    </location>
    <ligand>
        <name>GTP</name>
        <dbReference type="ChEBI" id="CHEBI:37565"/>
    </ligand>
</feature>
<feature type="binding site" evidence="2">
    <location>
        <begin position="136"/>
        <end position="139"/>
    </location>
    <ligand>
        <name>GTP</name>
        <dbReference type="ChEBI" id="CHEBI:37565"/>
    </ligand>
</feature>
<reference key="1">
    <citation type="submission" date="2007-11" db="EMBL/GenBank/DDBJ databases">
        <title>Complete sequence of chromosome of Shewanella baltica OS195.</title>
        <authorList>
            <consortium name="US DOE Joint Genome Institute"/>
            <person name="Copeland A."/>
            <person name="Lucas S."/>
            <person name="Lapidus A."/>
            <person name="Barry K."/>
            <person name="Glavina del Rio T."/>
            <person name="Dalin E."/>
            <person name="Tice H."/>
            <person name="Pitluck S."/>
            <person name="Chain P."/>
            <person name="Malfatti S."/>
            <person name="Shin M."/>
            <person name="Vergez L."/>
            <person name="Schmutz J."/>
            <person name="Larimer F."/>
            <person name="Land M."/>
            <person name="Hauser L."/>
            <person name="Kyrpides N."/>
            <person name="Kim E."/>
            <person name="Brettar I."/>
            <person name="Rodrigues J."/>
            <person name="Konstantinidis K."/>
            <person name="Klappenbach J."/>
            <person name="Hofle M."/>
            <person name="Tiedje J."/>
            <person name="Richardson P."/>
        </authorList>
    </citation>
    <scope>NUCLEOTIDE SEQUENCE [LARGE SCALE GENOMIC DNA]</scope>
    <source>
        <strain>OS195</strain>
    </source>
</reference>
<proteinExistence type="inferred from homology"/>
<protein>
    <recommendedName>
        <fullName evidence="2">Elongation factor Tu 1</fullName>
        <shortName evidence="2">EF-Tu 1</shortName>
        <ecNumber evidence="2">3.6.5.3</ecNumber>
    </recommendedName>
</protein>
<sequence>MAKAKFERIKPHVNVGTIGHVDHGKTTLTAAISHVLAKTYGGEAKDFSQIDNAPEERERGITINTSHIEYDTPTRHYAHVDCPGHADYVKNMITGAAQMDGAILVVASTDGPMPQTREHILLSRQVGVPYIIVFMNKCDMVDDEELLELVEMEVRELLSEYDFPGDDLPVIQGSALKALEGQPEWEAKIIELANALDSYIPEPQRDIDKPFLLPIEDVFSISGRGTVVTGRVERGIVKVGDEVEIVGVRTTTKTTCTGVEMFRKLLDEGRAGENCGVLLRGTKRDDVERGQVLAKPGSINPHTTFESEVYVLSKEEGGRHTPFFKGYRPQFYFRTTDVTGTIELPEGVEMVMPGDNIKMVVTLICPIAMDEGLRFAIREGGRTVGAGVVAKIIA</sequence>
<dbReference type="EC" id="3.6.5.3" evidence="2"/>
<dbReference type="EMBL" id="CP000891">
    <property type="protein sequence ID" value="ABX47368.1"/>
    <property type="molecule type" value="Genomic_DNA"/>
</dbReference>
<dbReference type="SMR" id="A9KW88"/>
<dbReference type="KEGG" id="sbn:Sbal195_0186"/>
<dbReference type="HOGENOM" id="CLU_007265_0_1_6"/>
<dbReference type="Proteomes" id="UP000000770">
    <property type="component" value="Chromosome"/>
</dbReference>
<dbReference type="GO" id="GO:0005829">
    <property type="term" value="C:cytosol"/>
    <property type="evidence" value="ECO:0007669"/>
    <property type="project" value="TreeGrafter"/>
</dbReference>
<dbReference type="GO" id="GO:0005525">
    <property type="term" value="F:GTP binding"/>
    <property type="evidence" value="ECO:0007669"/>
    <property type="project" value="UniProtKB-UniRule"/>
</dbReference>
<dbReference type="GO" id="GO:0003924">
    <property type="term" value="F:GTPase activity"/>
    <property type="evidence" value="ECO:0007669"/>
    <property type="project" value="InterPro"/>
</dbReference>
<dbReference type="GO" id="GO:0097216">
    <property type="term" value="F:guanosine tetraphosphate binding"/>
    <property type="evidence" value="ECO:0007669"/>
    <property type="project" value="UniProtKB-ARBA"/>
</dbReference>
<dbReference type="GO" id="GO:0003746">
    <property type="term" value="F:translation elongation factor activity"/>
    <property type="evidence" value="ECO:0007669"/>
    <property type="project" value="UniProtKB-UniRule"/>
</dbReference>
<dbReference type="CDD" id="cd01884">
    <property type="entry name" value="EF_Tu"/>
    <property type="match status" value="1"/>
</dbReference>
<dbReference type="CDD" id="cd03697">
    <property type="entry name" value="EFTU_II"/>
    <property type="match status" value="1"/>
</dbReference>
<dbReference type="CDD" id="cd03707">
    <property type="entry name" value="EFTU_III"/>
    <property type="match status" value="1"/>
</dbReference>
<dbReference type="FunFam" id="2.40.30.10:FF:000001">
    <property type="entry name" value="Elongation factor Tu"/>
    <property type="match status" value="1"/>
</dbReference>
<dbReference type="FunFam" id="3.40.50.300:FF:000003">
    <property type="entry name" value="Elongation factor Tu"/>
    <property type="match status" value="1"/>
</dbReference>
<dbReference type="Gene3D" id="3.40.50.300">
    <property type="entry name" value="P-loop containing nucleotide triphosphate hydrolases"/>
    <property type="match status" value="1"/>
</dbReference>
<dbReference type="Gene3D" id="2.40.30.10">
    <property type="entry name" value="Translation factors"/>
    <property type="match status" value="2"/>
</dbReference>
<dbReference type="HAMAP" id="MF_00118_B">
    <property type="entry name" value="EF_Tu_B"/>
    <property type="match status" value="1"/>
</dbReference>
<dbReference type="InterPro" id="IPR041709">
    <property type="entry name" value="EF-Tu_GTP-bd"/>
</dbReference>
<dbReference type="InterPro" id="IPR050055">
    <property type="entry name" value="EF-Tu_GTPase"/>
</dbReference>
<dbReference type="InterPro" id="IPR004161">
    <property type="entry name" value="EFTu-like_2"/>
</dbReference>
<dbReference type="InterPro" id="IPR033720">
    <property type="entry name" value="EFTU_2"/>
</dbReference>
<dbReference type="InterPro" id="IPR031157">
    <property type="entry name" value="G_TR_CS"/>
</dbReference>
<dbReference type="InterPro" id="IPR027417">
    <property type="entry name" value="P-loop_NTPase"/>
</dbReference>
<dbReference type="InterPro" id="IPR005225">
    <property type="entry name" value="Small_GTP-bd"/>
</dbReference>
<dbReference type="InterPro" id="IPR000795">
    <property type="entry name" value="T_Tr_GTP-bd_dom"/>
</dbReference>
<dbReference type="InterPro" id="IPR009000">
    <property type="entry name" value="Transl_B-barrel_sf"/>
</dbReference>
<dbReference type="InterPro" id="IPR009001">
    <property type="entry name" value="Transl_elong_EF1A/Init_IF2_C"/>
</dbReference>
<dbReference type="InterPro" id="IPR004541">
    <property type="entry name" value="Transl_elong_EFTu/EF1A_bac/org"/>
</dbReference>
<dbReference type="InterPro" id="IPR004160">
    <property type="entry name" value="Transl_elong_EFTu/EF1A_C"/>
</dbReference>
<dbReference type="NCBIfam" id="TIGR00485">
    <property type="entry name" value="EF-Tu"/>
    <property type="match status" value="1"/>
</dbReference>
<dbReference type="NCBIfam" id="NF000766">
    <property type="entry name" value="PRK00049.1"/>
    <property type="match status" value="1"/>
</dbReference>
<dbReference type="NCBIfam" id="NF009372">
    <property type="entry name" value="PRK12735.1"/>
    <property type="match status" value="1"/>
</dbReference>
<dbReference type="NCBIfam" id="NF009373">
    <property type="entry name" value="PRK12736.1"/>
    <property type="match status" value="1"/>
</dbReference>
<dbReference type="NCBIfam" id="TIGR00231">
    <property type="entry name" value="small_GTP"/>
    <property type="match status" value="1"/>
</dbReference>
<dbReference type="PANTHER" id="PTHR43721:SF22">
    <property type="entry name" value="ELONGATION FACTOR TU, MITOCHONDRIAL"/>
    <property type="match status" value="1"/>
</dbReference>
<dbReference type="PANTHER" id="PTHR43721">
    <property type="entry name" value="ELONGATION FACTOR TU-RELATED"/>
    <property type="match status" value="1"/>
</dbReference>
<dbReference type="Pfam" id="PF00009">
    <property type="entry name" value="GTP_EFTU"/>
    <property type="match status" value="1"/>
</dbReference>
<dbReference type="Pfam" id="PF03144">
    <property type="entry name" value="GTP_EFTU_D2"/>
    <property type="match status" value="1"/>
</dbReference>
<dbReference type="Pfam" id="PF03143">
    <property type="entry name" value="GTP_EFTU_D3"/>
    <property type="match status" value="1"/>
</dbReference>
<dbReference type="PRINTS" id="PR00315">
    <property type="entry name" value="ELONGATNFCT"/>
</dbReference>
<dbReference type="SUPFAM" id="SSF50465">
    <property type="entry name" value="EF-Tu/eEF-1alpha/eIF2-gamma C-terminal domain"/>
    <property type="match status" value="1"/>
</dbReference>
<dbReference type="SUPFAM" id="SSF52540">
    <property type="entry name" value="P-loop containing nucleoside triphosphate hydrolases"/>
    <property type="match status" value="1"/>
</dbReference>
<dbReference type="SUPFAM" id="SSF50447">
    <property type="entry name" value="Translation proteins"/>
    <property type="match status" value="1"/>
</dbReference>
<dbReference type="PROSITE" id="PS00301">
    <property type="entry name" value="G_TR_1"/>
    <property type="match status" value="1"/>
</dbReference>
<dbReference type="PROSITE" id="PS51722">
    <property type="entry name" value="G_TR_2"/>
    <property type="match status" value="1"/>
</dbReference>
<name>EFTU1_SHEB9</name>
<gene>
    <name evidence="2" type="primary">tuf1</name>
    <name type="ordered locus">Sbal195_0186</name>
</gene>
<organism>
    <name type="scientific">Shewanella baltica (strain OS195)</name>
    <dbReference type="NCBI Taxonomy" id="399599"/>
    <lineage>
        <taxon>Bacteria</taxon>
        <taxon>Pseudomonadati</taxon>
        <taxon>Pseudomonadota</taxon>
        <taxon>Gammaproteobacteria</taxon>
        <taxon>Alteromonadales</taxon>
        <taxon>Shewanellaceae</taxon>
        <taxon>Shewanella</taxon>
    </lineage>
</organism>
<accession>A9KW88</accession>